<feature type="chain" id="PRO_0000209167" description="Protein Smg homolog">
    <location>
        <begin position="1"/>
        <end position="158"/>
    </location>
</feature>
<evidence type="ECO:0000255" key="1">
    <source>
        <dbReference type="HAMAP-Rule" id="MF_00598"/>
    </source>
</evidence>
<evidence type="ECO:0000305" key="2"/>
<comment type="similarity">
    <text evidence="1">Belongs to the Smg family.</text>
</comment>
<comment type="sequence caution" evidence="2">
    <conflict type="erroneous initiation">
        <sequence resource="EMBL-CDS" id="AAO91488"/>
    </conflict>
</comment>
<gene>
    <name evidence="1" type="primary">smg</name>
    <name type="ordered locus">CBU_1999</name>
</gene>
<accession>Q83AA6</accession>
<sequence length="158" mass="18204">MKDESVLNVLMYLFKNHMQENCTLDLGEKKLLVQLEELGFHRTVIDQALSWLNNLSYSGREPMQLPQKNSFRVFSDYECDLLDTECRRFLITLEQQAILNPHTRELVINQALELSCEGIDVSLLKWVTLMVLFNQSSEKEALASMELLVLDDTVGGIH</sequence>
<protein>
    <recommendedName>
        <fullName evidence="1">Protein Smg homolog</fullName>
    </recommendedName>
</protein>
<name>SMG_COXBU</name>
<proteinExistence type="inferred from homology"/>
<dbReference type="EMBL" id="AE016828">
    <property type="protein sequence ID" value="AAO91488.2"/>
    <property type="status" value="ALT_INIT"/>
    <property type="molecule type" value="Genomic_DNA"/>
</dbReference>
<dbReference type="RefSeq" id="NP_820974.2">
    <property type="nucleotide sequence ID" value="NC_002971.3"/>
</dbReference>
<dbReference type="STRING" id="227377.CBU_1999"/>
<dbReference type="EnsemblBacteria" id="AAO91488">
    <property type="protein sequence ID" value="AAO91488"/>
    <property type="gene ID" value="CBU_1999"/>
</dbReference>
<dbReference type="GeneID" id="1209912"/>
<dbReference type="KEGG" id="cbu:CBU_1999"/>
<dbReference type="PATRIC" id="fig|227377.7.peg.1986"/>
<dbReference type="eggNOG" id="COG2922">
    <property type="taxonomic scope" value="Bacteria"/>
</dbReference>
<dbReference type="HOGENOM" id="CLU_133242_0_0_6"/>
<dbReference type="OrthoDB" id="9788984at2"/>
<dbReference type="Proteomes" id="UP000002671">
    <property type="component" value="Chromosome"/>
</dbReference>
<dbReference type="HAMAP" id="MF_00598">
    <property type="entry name" value="Smg"/>
    <property type="match status" value="1"/>
</dbReference>
<dbReference type="InterPro" id="IPR007456">
    <property type="entry name" value="Smg"/>
</dbReference>
<dbReference type="PANTHER" id="PTHR38692">
    <property type="entry name" value="PROTEIN SMG"/>
    <property type="match status" value="1"/>
</dbReference>
<dbReference type="PANTHER" id="PTHR38692:SF1">
    <property type="entry name" value="PROTEIN SMG"/>
    <property type="match status" value="1"/>
</dbReference>
<dbReference type="Pfam" id="PF04361">
    <property type="entry name" value="DUF494"/>
    <property type="match status" value="1"/>
</dbReference>
<reference key="1">
    <citation type="journal article" date="2003" name="Proc. Natl. Acad. Sci. U.S.A.">
        <title>Complete genome sequence of the Q-fever pathogen, Coxiella burnetii.</title>
        <authorList>
            <person name="Seshadri R."/>
            <person name="Paulsen I.T."/>
            <person name="Eisen J.A."/>
            <person name="Read T.D."/>
            <person name="Nelson K.E."/>
            <person name="Nelson W.C."/>
            <person name="Ward N.L."/>
            <person name="Tettelin H."/>
            <person name="Davidsen T.M."/>
            <person name="Beanan M.J."/>
            <person name="DeBoy R.T."/>
            <person name="Daugherty S.C."/>
            <person name="Brinkac L.M."/>
            <person name="Madupu R."/>
            <person name="Dodson R.J."/>
            <person name="Khouri H.M."/>
            <person name="Lee K.H."/>
            <person name="Carty H.A."/>
            <person name="Scanlan D."/>
            <person name="Heinzen R.A."/>
            <person name="Thompson H.A."/>
            <person name="Samuel J.E."/>
            <person name="Fraser C.M."/>
            <person name="Heidelberg J.F."/>
        </authorList>
    </citation>
    <scope>NUCLEOTIDE SEQUENCE [LARGE SCALE GENOMIC DNA]</scope>
    <source>
        <strain>RSA 493 / Nine Mile phase I</strain>
    </source>
</reference>
<organism>
    <name type="scientific">Coxiella burnetii (strain RSA 493 / Nine Mile phase I)</name>
    <dbReference type="NCBI Taxonomy" id="227377"/>
    <lineage>
        <taxon>Bacteria</taxon>
        <taxon>Pseudomonadati</taxon>
        <taxon>Pseudomonadota</taxon>
        <taxon>Gammaproteobacteria</taxon>
        <taxon>Legionellales</taxon>
        <taxon>Coxiellaceae</taxon>
        <taxon>Coxiella</taxon>
    </lineage>
</organism>
<keyword id="KW-1185">Reference proteome</keyword>